<organism>
    <name type="scientific">Campylobacter jejuni subsp. jejuni serotype O:2 (strain ATCC 700819 / NCTC 11168)</name>
    <dbReference type="NCBI Taxonomy" id="192222"/>
    <lineage>
        <taxon>Bacteria</taxon>
        <taxon>Pseudomonadati</taxon>
        <taxon>Campylobacterota</taxon>
        <taxon>Epsilonproteobacteria</taxon>
        <taxon>Campylobacterales</taxon>
        <taxon>Campylobacteraceae</taxon>
        <taxon>Campylobacter</taxon>
    </lineage>
</organism>
<feature type="chain" id="PRO_0000125635" description="Large ribosomal subunit protein uL1">
    <location>
        <begin position="1"/>
        <end position="233"/>
    </location>
</feature>
<sequence>MAKIAKRLKELSQKIDSNKEYALSDAIDTIKTLKSAKFDETVEIALKLNVDPRHADQMVRGSVVLPAGTGKKVRVAVIAKDAKADEAKNAGADIVGSDDLVEEIQKGNMNFDVLIATPNLMGLVGKVGRILGPKGLMPNPKTGTVTMDVAQAVNNAKSGQVNFRVDKQGNIHAGLGKVSFSKEQLWDNVSTFVKAINKHKPAAAKGRYIKNAALSLTMSPSVKLETQELLDMK</sequence>
<evidence type="ECO:0000255" key="1">
    <source>
        <dbReference type="HAMAP-Rule" id="MF_01318"/>
    </source>
</evidence>
<evidence type="ECO:0000305" key="2"/>
<proteinExistence type="inferred from homology"/>
<dbReference type="EMBL" id="AL111168">
    <property type="protein sequence ID" value="CAL34623.1"/>
    <property type="molecule type" value="Genomic_DNA"/>
</dbReference>
<dbReference type="PIR" id="F81392">
    <property type="entry name" value="F81392"/>
</dbReference>
<dbReference type="RefSeq" id="WP_002854928.1">
    <property type="nucleotide sequence ID" value="NZ_SZUC01000002.1"/>
</dbReference>
<dbReference type="RefSeq" id="YP_002343909.1">
    <property type="nucleotide sequence ID" value="NC_002163.1"/>
</dbReference>
<dbReference type="SMR" id="Q9PI34"/>
<dbReference type="IntAct" id="Q9PI34">
    <property type="interactions" value="8"/>
</dbReference>
<dbReference type="STRING" id="192222.Cj0475"/>
<dbReference type="PaxDb" id="192222-Cj0475"/>
<dbReference type="EnsemblBacteria" id="CAL34623">
    <property type="protein sequence ID" value="CAL34623"/>
    <property type="gene ID" value="Cj0475"/>
</dbReference>
<dbReference type="GeneID" id="904803"/>
<dbReference type="KEGG" id="cje:Cj0475"/>
<dbReference type="PATRIC" id="fig|192222.6.peg.467"/>
<dbReference type="eggNOG" id="COG0081">
    <property type="taxonomic scope" value="Bacteria"/>
</dbReference>
<dbReference type="HOGENOM" id="CLU_062853_0_0_7"/>
<dbReference type="OrthoDB" id="9803740at2"/>
<dbReference type="Proteomes" id="UP000000799">
    <property type="component" value="Chromosome"/>
</dbReference>
<dbReference type="GO" id="GO:0022625">
    <property type="term" value="C:cytosolic large ribosomal subunit"/>
    <property type="evidence" value="ECO:0007669"/>
    <property type="project" value="TreeGrafter"/>
</dbReference>
<dbReference type="GO" id="GO:0019843">
    <property type="term" value="F:rRNA binding"/>
    <property type="evidence" value="ECO:0007669"/>
    <property type="project" value="UniProtKB-UniRule"/>
</dbReference>
<dbReference type="GO" id="GO:0003735">
    <property type="term" value="F:structural constituent of ribosome"/>
    <property type="evidence" value="ECO:0007669"/>
    <property type="project" value="InterPro"/>
</dbReference>
<dbReference type="GO" id="GO:0000049">
    <property type="term" value="F:tRNA binding"/>
    <property type="evidence" value="ECO:0007669"/>
    <property type="project" value="UniProtKB-KW"/>
</dbReference>
<dbReference type="GO" id="GO:0006417">
    <property type="term" value="P:regulation of translation"/>
    <property type="evidence" value="ECO:0007669"/>
    <property type="project" value="UniProtKB-KW"/>
</dbReference>
<dbReference type="GO" id="GO:0006412">
    <property type="term" value="P:translation"/>
    <property type="evidence" value="ECO:0007669"/>
    <property type="project" value="UniProtKB-UniRule"/>
</dbReference>
<dbReference type="CDD" id="cd00403">
    <property type="entry name" value="Ribosomal_L1"/>
    <property type="match status" value="1"/>
</dbReference>
<dbReference type="FunFam" id="3.40.50.790:FF:000001">
    <property type="entry name" value="50S ribosomal protein L1"/>
    <property type="match status" value="1"/>
</dbReference>
<dbReference type="Gene3D" id="3.30.190.20">
    <property type="match status" value="1"/>
</dbReference>
<dbReference type="Gene3D" id="3.40.50.790">
    <property type="match status" value="1"/>
</dbReference>
<dbReference type="HAMAP" id="MF_01318_B">
    <property type="entry name" value="Ribosomal_uL1_B"/>
    <property type="match status" value="1"/>
</dbReference>
<dbReference type="InterPro" id="IPR005878">
    <property type="entry name" value="Ribosom_uL1_bac-type"/>
</dbReference>
<dbReference type="InterPro" id="IPR002143">
    <property type="entry name" value="Ribosomal_uL1"/>
</dbReference>
<dbReference type="InterPro" id="IPR023674">
    <property type="entry name" value="Ribosomal_uL1-like"/>
</dbReference>
<dbReference type="InterPro" id="IPR028364">
    <property type="entry name" value="Ribosomal_uL1/biogenesis"/>
</dbReference>
<dbReference type="InterPro" id="IPR016095">
    <property type="entry name" value="Ribosomal_uL1_3-a/b-sand"/>
</dbReference>
<dbReference type="InterPro" id="IPR023673">
    <property type="entry name" value="Ribosomal_uL1_CS"/>
</dbReference>
<dbReference type="NCBIfam" id="TIGR01169">
    <property type="entry name" value="rplA_bact"/>
    <property type="match status" value="1"/>
</dbReference>
<dbReference type="PANTHER" id="PTHR36427">
    <property type="entry name" value="54S RIBOSOMAL PROTEIN L1, MITOCHONDRIAL"/>
    <property type="match status" value="1"/>
</dbReference>
<dbReference type="PANTHER" id="PTHR36427:SF3">
    <property type="entry name" value="LARGE RIBOSOMAL SUBUNIT PROTEIN UL1M"/>
    <property type="match status" value="1"/>
</dbReference>
<dbReference type="Pfam" id="PF00687">
    <property type="entry name" value="Ribosomal_L1"/>
    <property type="match status" value="1"/>
</dbReference>
<dbReference type="PIRSF" id="PIRSF002155">
    <property type="entry name" value="Ribosomal_L1"/>
    <property type="match status" value="1"/>
</dbReference>
<dbReference type="SUPFAM" id="SSF56808">
    <property type="entry name" value="Ribosomal protein L1"/>
    <property type="match status" value="1"/>
</dbReference>
<dbReference type="PROSITE" id="PS01199">
    <property type="entry name" value="RIBOSOMAL_L1"/>
    <property type="match status" value="1"/>
</dbReference>
<protein>
    <recommendedName>
        <fullName evidence="1">Large ribosomal subunit protein uL1</fullName>
    </recommendedName>
    <alternativeName>
        <fullName evidence="2">50S ribosomal protein L1</fullName>
    </alternativeName>
</protein>
<keyword id="KW-1185">Reference proteome</keyword>
<keyword id="KW-0678">Repressor</keyword>
<keyword id="KW-0687">Ribonucleoprotein</keyword>
<keyword id="KW-0689">Ribosomal protein</keyword>
<keyword id="KW-0694">RNA-binding</keyword>
<keyword id="KW-0699">rRNA-binding</keyword>
<keyword id="KW-0810">Translation regulation</keyword>
<keyword id="KW-0820">tRNA-binding</keyword>
<name>RL1_CAMJE</name>
<accession>Q9PI34</accession>
<accession>Q0PB38</accession>
<gene>
    <name evidence="1" type="primary">rplA</name>
    <name type="ordered locus">Cj0475</name>
</gene>
<reference key="1">
    <citation type="journal article" date="2000" name="Nature">
        <title>The genome sequence of the food-borne pathogen Campylobacter jejuni reveals hypervariable sequences.</title>
        <authorList>
            <person name="Parkhill J."/>
            <person name="Wren B.W."/>
            <person name="Mungall K.L."/>
            <person name="Ketley J.M."/>
            <person name="Churcher C.M."/>
            <person name="Basham D."/>
            <person name="Chillingworth T."/>
            <person name="Davies R.M."/>
            <person name="Feltwell T."/>
            <person name="Holroyd S."/>
            <person name="Jagels K."/>
            <person name="Karlyshev A.V."/>
            <person name="Moule S."/>
            <person name="Pallen M.J."/>
            <person name="Penn C.W."/>
            <person name="Quail M.A."/>
            <person name="Rajandream M.A."/>
            <person name="Rutherford K.M."/>
            <person name="van Vliet A.H.M."/>
            <person name="Whitehead S."/>
            <person name="Barrell B.G."/>
        </authorList>
    </citation>
    <scope>NUCLEOTIDE SEQUENCE [LARGE SCALE GENOMIC DNA]</scope>
    <source>
        <strain>ATCC 700819 / NCTC 11168</strain>
    </source>
</reference>
<comment type="function">
    <text evidence="1">Binds directly to 23S rRNA. The L1 stalk is quite mobile in the ribosome, and is involved in E site tRNA release.</text>
</comment>
<comment type="function">
    <text evidence="1">Protein L1 is also a translational repressor protein, it controls the translation of the L11 operon by binding to its mRNA.</text>
</comment>
<comment type="subunit">
    <text evidence="1">Part of the 50S ribosomal subunit.</text>
</comment>
<comment type="similarity">
    <text evidence="1">Belongs to the universal ribosomal protein uL1 family.</text>
</comment>